<protein>
    <recommendedName>
        <fullName>Thyrotropin-releasing hormone</fullName>
        <shortName>TRH</shortName>
    </recommendedName>
    <alternativeName>
        <fullName>Protirelin</fullName>
    </alternativeName>
    <alternativeName>
        <fullName>TSH-releasing factor</fullName>
    </alternativeName>
    <alternativeName>
        <fullName>Thyroliberin</fullName>
    </alternativeName>
    <alternativeName>
        <fullName>Thyrotropin-releasing factor</fullName>
        <shortName>TRF</shortName>
    </alternativeName>
</protein>
<organism>
    <name type="scientific">Ovis aries</name>
    <name type="common">Sheep</name>
    <dbReference type="NCBI Taxonomy" id="9940"/>
    <lineage>
        <taxon>Eukaryota</taxon>
        <taxon>Metazoa</taxon>
        <taxon>Chordata</taxon>
        <taxon>Craniata</taxon>
        <taxon>Vertebrata</taxon>
        <taxon>Euteleostomi</taxon>
        <taxon>Mammalia</taxon>
        <taxon>Eutheria</taxon>
        <taxon>Laurasiatheria</taxon>
        <taxon>Artiodactyla</taxon>
        <taxon>Ruminantia</taxon>
        <taxon>Pecora</taxon>
        <taxon>Bovidae</taxon>
        <taxon>Caprinae</taxon>
        <taxon>Ovis</taxon>
    </lineage>
</organism>
<name>TRH_SHEEP</name>
<comment type="function">
    <text>Functions as a regulator of the biosynthesis of TSH in the anterior pituitary gland and as a neurotransmitter/ neuromodulator in the central and peripheral nervous systems.</text>
</comment>
<comment type="subcellular location">
    <subcellularLocation>
        <location>Secreted</location>
    </subcellularLocation>
</comment>
<comment type="similarity">
    <text evidence="2">Belongs to the TRH family.</text>
</comment>
<feature type="peptide" id="PRO_0000044562" description="Thyrotropin-releasing hormone">
    <location>
        <begin position="1"/>
        <end position="3"/>
    </location>
</feature>
<feature type="modified residue" description="Pyrrolidone carboxylic acid" evidence="1">
    <location>
        <position position="1"/>
    </location>
</feature>
<feature type="modified residue" description="Proline amide" evidence="1">
    <location>
        <position position="3"/>
    </location>
</feature>
<keyword id="KW-0027">Amidation</keyword>
<keyword id="KW-0903">Direct protein sequencing</keyword>
<keyword id="KW-0873">Pyrrolidone carboxylic acid</keyword>
<keyword id="KW-1185">Reference proteome</keyword>
<keyword id="KW-0964">Secreted</keyword>
<evidence type="ECO:0000269" key="1">
    <source ref="1"/>
</evidence>
<evidence type="ECO:0000305" key="2"/>
<gene>
    <name type="primary">TRH</name>
</gene>
<sequence>QHP</sequence>
<reference key="1">
    <citation type="journal article" date="1971" name="Org. Mass Spectrom.">
        <title>The elucidation of the primary structure of the hypothalamic thyroid stimulating hormone releasing factor of ovine origin by means of mass spectrometry.</title>
        <authorList>
            <person name="Desiderio D.M. Jr."/>
            <person name="Burgus R."/>
            <person name="Dunn T.F."/>
            <person name="Vale W."/>
            <person name="Guillemin R."/>
            <person name="Ward D.N."/>
        </authorList>
    </citation>
    <scope>PROTEIN SEQUENCE</scope>
    <scope>PYROGLUTAMATE FORMATION AT GLN-1</scope>
    <scope>AMIDATION AT PRO-3</scope>
    <source>
        <tissue>Hypothalamus</tissue>
    </source>
</reference>
<reference key="2">
    <citation type="journal article" date="1970" name="Nature">
        <title>Characterization of ovine hypothalamic hypophysiotropic TSH-releasing factor.</title>
        <authorList>
            <person name="Burgus R."/>
            <person name="Dunn T.F."/>
            <person name="Desiderio D.M."/>
            <person name="Ward D.N."/>
            <person name="Vale W."/>
            <person name="Guillemin R."/>
        </authorList>
    </citation>
    <scope>SYNTHESIS</scope>
</reference>
<proteinExistence type="evidence at protein level"/>
<dbReference type="PIR" id="A93750">
    <property type="entry name" value="RHSHT"/>
</dbReference>
<dbReference type="SMR" id="P62969"/>
<dbReference type="Proteomes" id="UP000002356">
    <property type="component" value="Unplaced"/>
</dbReference>
<dbReference type="GO" id="GO:0005576">
    <property type="term" value="C:extracellular region"/>
    <property type="evidence" value="ECO:0007669"/>
    <property type="project" value="UniProtKB-SubCell"/>
</dbReference>
<accession>P62969</accession>
<accession>P01151</accession>